<reference key="1">
    <citation type="submission" date="1994-03" db="EMBL/GenBank/DDBJ databases">
        <authorList>
            <person name="McDonald J.H."/>
            <person name="Kreitman M.E."/>
        </authorList>
    </citation>
    <scope>NUCLEOTIDE SEQUENCE [GENOMIC DNA]</scope>
    <source>
        <strain>Brazzaville</strain>
    </source>
</reference>
<reference key="2">
    <citation type="journal article" date="2007" name="Nature">
        <title>Evolution of genes and genomes on the Drosophila phylogeny.</title>
        <authorList>
            <consortium name="Drosophila 12 genomes consortium"/>
        </authorList>
    </citation>
    <scope>NUCLEOTIDE SEQUENCE [LARGE SCALE GENOMIC DNA]</scope>
    <source>
        <strain>Tai18E2 / Tucson 14021-0261.01</strain>
    </source>
</reference>
<proteinExistence type="inferred from homology"/>
<evidence type="ECO:0000250" key="1"/>
<evidence type="ECO:0000305" key="2"/>
<organism>
    <name type="scientific">Drosophila yakuba</name>
    <name type="common">Fruit fly</name>
    <dbReference type="NCBI Taxonomy" id="7245"/>
    <lineage>
        <taxon>Eukaryota</taxon>
        <taxon>Metazoa</taxon>
        <taxon>Ecdysozoa</taxon>
        <taxon>Arthropoda</taxon>
        <taxon>Hexapoda</taxon>
        <taxon>Insecta</taxon>
        <taxon>Pterygota</taxon>
        <taxon>Neoptera</taxon>
        <taxon>Endopterygota</taxon>
        <taxon>Diptera</taxon>
        <taxon>Brachycera</taxon>
        <taxon>Muscomorpha</taxon>
        <taxon>Ephydroidea</taxon>
        <taxon>Drosophilidae</taxon>
        <taxon>Drosophila</taxon>
        <taxon>Sophophora</taxon>
    </lineage>
</organism>
<dbReference type="EC" id="5.3.1.9"/>
<dbReference type="EMBL" id="L27673">
    <property type="protein sequence ID" value="AAA28787.1"/>
    <property type="molecule type" value="Genomic_DNA"/>
</dbReference>
<dbReference type="EMBL" id="L27674">
    <property type="protein sequence ID" value="AAA28788.1"/>
    <property type="molecule type" value="Genomic_DNA"/>
</dbReference>
<dbReference type="EMBL" id="L27675">
    <property type="protein sequence ID" value="AAB59188.1"/>
    <property type="molecule type" value="Genomic_DNA"/>
</dbReference>
<dbReference type="EMBL" id="L27676">
    <property type="protein sequence ID" value="AAA28806.1"/>
    <property type="molecule type" value="Genomic_DNA"/>
</dbReference>
<dbReference type="EMBL" id="L27677">
    <property type="protein sequence ID" value="AAA28807.1"/>
    <property type="molecule type" value="Genomic_DNA"/>
</dbReference>
<dbReference type="EMBL" id="L27678">
    <property type="protein sequence ID" value="AAA28808.1"/>
    <property type="molecule type" value="Genomic_DNA"/>
</dbReference>
<dbReference type="EMBL" id="L27679">
    <property type="protein sequence ID" value="AAA28809.1"/>
    <property type="molecule type" value="Genomic_DNA"/>
</dbReference>
<dbReference type="EMBL" id="L27680">
    <property type="protein sequence ID" value="AAA28810.1"/>
    <property type="molecule type" value="Genomic_DNA"/>
</dbReference>
<dbReference type="EMBL" id="L27681">
    <property type="protein sequence ID" value="AAA28811.1"/>
    <property type="molecule type" value="Genomic_DNA"/>
</dbReference>
<dbReference type="EMBL" id="L27682">
    <property type="protein sequence ID" value="AAA28812.1"/>
    <property type="molecule type" value="Genomic_DNA"/>
</dbReference>
<dbReference type="EMBL" id="L27683">
    <property type="protein sequence ID" value="AAA28813.1"/>
    <property type="molecule type" value="Genomic_DNA"/>
</dbReference>
<dbReference type="EMBL" id="L27684">
    <property type="protein sequence ID" value="AAA28814.1"/>
    <property type="molecule type" value="Genomic_DNA"/>
</dbReference>
<dbReference type="EMBL" id="L27685">
    <property type="protein sequence ID" value="AAA28815.1"/>
    <property type="molecule type" value="Genomic_DNA"/>
</dbReference>
<dbReference type="EMBL" id="CM000157">
    <property type="protein sequence ID" value="EDW89413.1"/>
    <property type="molecule type" value="Genomic_DNA"/>
</dbReference>
<dbReference type="RefSeq" id="XP_002089701.1">
    <property type="nucleotide sequence ID" value="XM_002089665.2"/>
</dbReference>
<dbReference type="RefSeq" id="XP_015054313.1">
    <property type="nucleotide sequence ID" value="XM_015198827.1"/>
</dbReference>
<dbReference type="SMR" id="P52031"/>
<dbReference type="EnsemblMetazoa" id="FBtr0269247">
    <property type="protein sequence ID" value="FBpp0267739"/>
    <property type="gene ID" value="FBgn0013171"/>
</dbReference>
<dbReference type="EnsemblMetazoa" id="FBtr0399001">
    <property type="protein sequence ID" value="FBpp0358056"/>
    <property type="gene ID" value="FBgn0013171"/>
</dbReference>
<dbReference type="EnsemblMetazoa" id="XM_039371085.2">
    <property type="protein sequence ID" value="XP_039227019.1"/>
    <property type="gene ID" value="LOC6528659"/>
</dbReference>
<dbReference type="KEGG" id="dya:Dyak_GE22729"/>
<dbReference type="eggNOG" id="KOG2446">
    <property type="taxonomic scope" value="Eukaryota"/>
</dbReference>
<dbReference type="HOGENOM" id="CLU_017947_3_1_1"/>
<dbReference type="OMA" id="DWYRQLW"/>
<dbReference type="OrthoDB" id="5831190at2759"/>
<dbReference type="PhylomeDB" id="P52031"/>
<dbReference type="UniPathway" id="UPA00109">
    <property type="reaction ID" value="UER00181"/>
</dbReference>
<dbReference type="Proteomes" id="UP000002282">
    <property type="component" value="Chromosome 2L"/>
</dbReference>
<dbReference type="GO" id="GO:0005829">
    <property type="term" value="C:cytosol"/>
    <property type="evidence" value="ECO:0007669"/>
    <property type="project" value="EnsemblMetazoa"/>
</dbReference>
<dbReference type="GO" id="GO:0097367">
    <property type="term" value="F:carbohydrate derivative binding"/>
    <property type="evidence" value="ECO:0007669"/>
    <property type="project" value="InterPro"/>
</dbReference>
<dbReference type="GO" id="GO:0004347">
    <property type="term" value="F:glucose-6-phosphate isomerase activity"/>
    <property type="evidence" value="ECO:0007669"/>
    <property type="project" value="UniProtKB-EC"/>
</dbReference>
<dbReference type="GO" id="GO:0048029">
    <property type="term" value="F:monosaccharide binding"/>
    <property type="evidence" value="ECO:0007669"/>
    <property type="project" value="TreeGrafter"/>
</dbReference>
<dbReference type="GO" id="GO:0061621">
    <property type="term" value="P:canonical glycolysis"/>
    <property type="evidence" value="ECO:0007669"/>
    <property type="project" value="EnsemblMetazoa"/>
</dbReference>
<dbReference type="GO" id="GO:0006002">
    <property type="term" value="P:fructose 6-phosphate metabolic process"/>
    <property type="evidence" value="ECO:0007669"/>
    <property type="project" value="EnsemblMetazoa"/>
</dbReference>
<dbReference type="GO" id="GO:0006094">
    <property type="term" value="P:gluconeogenesis"/>
    <property type="evidence" value="ECO:0007669"/>
    <property type="project" value="UniProtKB-KW"/>
</dbReference>
<dbReference type="GO" id="GO:0051156">
    <property type="term" value="P:glucose 6-phosphate metabolic process"/>
    <property type="evidence" value="ECO:0007669"/>
    <property type="project" value="EnsemblMetazoa"/>
</dbReference>
<dbReference type="GO" id="GO:0042593">
    <property type="term" value="P:glucose homeostasis"/>
    <property type="evidence" value="ECO:0007669"/>
    <property type="project" value="EnsemblMetazoa"/>
</dbReference>
<dbReference type="CDD" id="cd05015">
    <property type="entry name" value="SIS_PGI_1"/>
    <property type="match status" value="1"/>
</dbReference>
<dbReference type="CDD" id="cd05016">
    <property type="entry name" value="SIS_PGI_2"/>
    <property type="match status" value="1"/>
</dbReference>
<dbReference type="FunFam" id="1.10.1390.10:FF:000001">
    <property type="entry name" value="Glucose-6-phosphate isomerase"/>
    <property type="match status" value="1"/>
</dbReference>
<dbReference type="FunFam" id="3.40.50.10490:FF:000004">
    <property type="entry name" value="Glucose-6-phosphate isomerase"/>
    <property type="match status" value="1"/>
</dbReference>
<dbReference type="Gene3D" id="1.10.1390.10">
    <property type="match status" value="1"/>
</dbReference>
<dbReference type="Gene3D" id="3.40.50.10490">
    <property type="entry name" value="Glucose-6-phosphate isomerase like protein, domain 1"/>
    <property type="match status" value="2"/>
</dbReference>
<dbReference type="HAMAP" id="MF_00473">
    <property type="entry name" value="G6P_isomerase"/>
    <property type="match status" value="1"/>
</dbReference>
<dbReference type="InterPro" id="IPR001672">
    <property type="entry name" value="G6P_Isomerase"/>
</dbReference>
<dbReference type="InterPro" id="IPR023096">
    <property type="entry name" value="G6P_Isomerase_C"/>
</dbReference>
<dbReference type="InterPro" id="IPR018189">
    <property type="entry name" value="Phosphoglucose_isomerase_CS"/>
</dbReference>
<dbReference type="InterPro" id="IPR046348">
    <property type="entry name" value="SIS_dom_sf"/>
</dbReference>
<dbReference type="InterPro" id="IPR035476">
    <property type="entry name" value="SIS_PGI_1"/>
</dbReference>
<dbReference type="InterPro" id="IPR035482">
    <property type="entry name" value="SIS_PGI_2"/>
</dbReference>
<dbReference type="NCBIfam" id="NF001211">
    <property type="entry name" value="PRK00179.1"/>
    <property type="match status" value="1"/>
</dbReference>
<dbReference type="PANTHER" id="PTHR11469">
    <property type="entry name" value="GLUCOSE-6-PHOSPHATE ISOMERASE"/>
    <property type="match status" value="1"/>
</dbReference>
<dbReference type="PANTHER" id="PTHR11469:SF1">
    <property type="entry name" value="GLUCOSE-6-PHOSPHATE ISOMERASE"/>
    <property type="match status" value="1"/>
</dbReference>
<dbReference type="Pfam" id="PF00342">
    <property type="entry name" value="PGI"/>
    <property type="match status" value="1"/>
</dbReference>
<dbReference type="PRINTS" id="PR00662">
    <property type="entry name" value="G6PISOMERASE"/>
</dbReference>
<dbReference type="SUPFAM" id="SSF53697">
    <property type="entry name" value="SIS domain"/>
    <property type="match status" value="1"/>
</dbReference>
<dbReference type="PROSITE" id="PS00765">
    <property type="entry name" value="P_GLUCOSE_ISOMERASE_1"/>
    <property type="match status" value="1"/>
</dbReference>
<dbReference type="PROSITE" id="PS00174">
    <property type="entry name" value="P_GLUCOSE_ISOMERASE_2"/>
    <property type="match status" value="1"/>
</dbReference>
<dbReference type="PROSITE" id="PS51463">
    <property type="entry name" value="P_GLUCOSE_ISOMERASE_3"/>
    <property type="match status" value="1"/>
</dbReference>
<keyword id="KW-0963">Cytoplasm</keyword>
<keyword id="KW-0312">Gluconeogenesis</keyword>
<keyword id="KW-0324">Glycolysis</keyword>
<keyword id="KW-0413">Isomerase</keyword>
<accession>P52031</accession>
<accession>B4P3E0</accession>
<sequence>MAGPLPPLNQEAAFQKLQEYYDSSGKDLNIKDLFVKDAKRFSKYSLRLHTQNDGEILLDYSKNRINDEVWDLLLALAKVRRVDAARDAMFSGQHINITENRAVLHTALRNRGTDPVLVDDKDVMPDVRAELAHMKEFTNMVISGVWRGCTGKQITDVVNIGIGGSDLGPLMVTEALKPYGKGLHSHFVSNIDGTHLAEVLKKVNYETTLFIVASKTFTTQETITNATSAKTWLLEHSKEPESVAKHFVALSTNKEKVTEFGIDSTNMFGFWDWVGGRYSLWSAIGLSICLSIGFENFEQLLDGAHYMDNHFRTTPLEKNAPVILALLGVWYSNFFKAETHALLPYDQYLHRFAAYFQQGDMESNGKFVSKAGKAVKYSTGPIVWGEPGTNGQHAFYQLIHQGTRLIPCDFIAPAQTHNPIAGGKHHKILLSNFLAQTEALMAGKTVDEARAELSKAGLCGNELDNLLPHKVFVGNRPTNSIVVKKVSPFTLGALIALYEHKIFVQGIIWDINSFDQWGVELGKQLAKAIEPELDHCNEVSTHDSSTNGLINFIKANWK</sequence>
<comment type="catalytic activity">
    <reaction>
        <text>alpha-D-glucose 6-phosphate = beta-D-fructose 6-phosphate</text>
        <dbReference type="Rhea" id="RHEA:11816"/>
        <dbReference type="ChEBI" id="CHEBI:57634"/>
        <dbReference type="ChEBI" id="CHEBI:58225"/>
        <dbReference type="EC" id="5.3.1.9"/>
    </reaction>
</comment>
<comment type="pathway">
    <text>Carbohydrate degradation; glycolysis; D-glyceraldehyde 3-phosphate and glycerone phosphate from D-glucose: step 2/4.</text>
</comment>
<comment type="subcellular location">
    <subcellularLocation>
        <location evidence="1">Cytoplasm</location>
    </subcellularLocation>
</comment>
<comment type="similarity">
    <text evidence="2">Belongs to the GPI family.</text>
</comment>
<protein>
    <recommendedName>
        <fullName>Glucose-6-phosphate isomerase</fullName>
        <shortName>GPI</shortName>
        <ecNumber>5.3.1.9</ecNumber>
    </recommendedName>
    <alternativeName>
        <fullName>Phosphoglucose isomerase</fullName>
        <shortName>PGI</shortName>
    </alternativeName>
    <alternativeName>
        <fullName>Phosphohexose isomerase</fullName>
        <shortName>PHI</shortName>
    </alternativeName>
</protein>
<name>G6PI_DROYA</name>
<gene>
    <name type="primary">Pgi</name>
    <name type="ORF">GE22729</name>
</gene>
<feature type="chain" id="PRO_0000180545" description="Glucose-6-phosphate isomerase">
    <location>
        <begin position="1"/>
        <end position="558"/>
    </location>
</feature>
<feature type="active site" description="Proton donor" evidence="1">
    <location>
        <position position="362"/>
    </location>
</feature>
<feature type="active site" evidence="1">
    <location>
        <position position="393"/>
    </location>
</feature>
<feature type="active site" evidence="1">
    <location>
        <position position="523"/>
    </location>
</feature>